<accession>Q1C2X1</accession>
<gene>
    <name evidence="1" type="primary">rpoA</name>
    <name type="ordered locus">YPA_3239</name>
</gene>
<keyword id="KW-0240">DNA-directed RNA polymerase</keyword>
<keyword id="KW-0548">Nucleotidyltransferase</keyword>
<keyword id="KW-0804">Transcription</keyword>
<keyword id="KW-0808">Transferase</keyword>
<organism>
    <name type="scientific">Yersinia pestis bv. Antiqua (strain Antiqua)</name>
    <dbReference type="NCBI Taxonomy" id="360102"/>
    <lineage>
        <taxon>Bacteria</taxon>
        <taxon>Pseudomonadati</taxon>
        <taxon>Pseudomonadota</taxon>
        <taxon>Gammaproteobacteria</taxon>
        <taxon>Enterobacterales</taxon>
        <taxon>Yersiniaceae</taxon>
        <taxon>Yersinia</taxon>
    </lineage>
</organism>
<feature type="chain" id="PRO_0000264569" description="DNA-directed RNA polymerase subunit alpha">
    <location>
        <begin position="1"/>
        <end position="329"/>
    </location>
</feature>
<feature type="region of interest" description="Alpha N-terminal domain (alpha-NTD)" evidence="1">
    <location>
        <begin position="1"/>
        <end position="235"/>
    </location>
</feature>
<feature type="region of interest" description="Alpha C-terminal domain (alpha-CTD)" evidence="1">
    <location>
        <begin position="249"/>
        <end position="329"/>
    </location>
</feature>
<proteinExistence type="inferred from homology"/>
<sequence>MQGSVTEFLKPRLVDIEQVSSTHAKVTLEPLERGFGHTLGNALRRILLSSMPGCAVTEVEIDGVLHEYSTKEGVQEDILEILLNLKGLAVRVQGKDEVILTLNKSGIGPVTAADITHDGDVEIVKPQHVICHLTDENASINMRIKVQRGRGYVPASARIHSEEDERPIGRLLVDACYSPVERIAYNVEAARVEQRTDLDKLVIEMETNGTIDPEEAIRRAATILAEQLEAFVDLRDVRQPEVKEEKPEFDPILLRPVDDLELTVRSANCLKAEAIHYIGDLVQRTEVELLKTPNLGKKSLTEIKDVLASRGLSLGMRLENWPPASIADE</sequence>
<protein>
    <recommendedName>
        <fullName evidence="1">DNA-directed RNA polymerase subunit alpha</fullName>
        <shortName evidence="1">RNAP subunit alpha</shortName>
        <ecNumber evidence="1">2.7.7.6</ecNumber>
    </recommendedName>
    <alternativeName>
        <fullName evidence="1">RNA polymerase subunit alpha</fullName>
    </alternativeName>
    <alternativeName>
        <fullName evidence="1">Transcriptase subunit alpha</fullName>
    </alternativeName>
</protein>
<name>RPOA_YERPA</name>
<dbReference type="EC" id="2.7.7.6" evidence="1"/>
<dbReference type="EMBL" id="CP000308">
    <property type="protein sequence ID" value="ABG15201.1"/>
    <property type="molecule type" value="Genomic_DNA"/>
</dbReference>
<dbReference type="RefSeq" id="WP_002209013.1">
    <property type="nucleotide sequence ID" value="NZ_CP009906.1"/>
</dbReference>
<dbReference type="SMR" id="Q1C2X1"/>
<dbReference type="KEGG" id="ypa:YPA_3239"/>
<dbReference type="Proteomes" id="UP000001971">
    <property type="component" value="Chromosome"/>
</dbReference>
<dbReference type="GO" id="GO:0005737">
    <property type="term" value="C:cytoplasm"/>
    <property type="evidence" value="ECO:0007669"/>
    <property type="project" value="UniProtKB-ARBA"/>
</dbReference>
<dbReference type="GO" id="GO:0000428">
    <property type="term" value="C:DNA-directed RNA polymerase complex"/>
    <property type="evidence" value="ECO:0007669"/>
    <property type="project" value="UniProtKB-KW"/>
</dbReference>
<dbReference type="GO" id="GO:0003677">
    <property type="term" value="F:DNA binding"/>
    <property type="evidence" value="ECO:0007669"/>
    <property type="project" value="UniProtKB-UniRule"/>
</dbReference>
<dbReference type="GO" id="GO:0003899">
    <property type="term" value="F:DNA-directed RNA polymerase activity"/>
    <property type="evidence" value="ECO:0007669"/>
    <property type="project" value="UniProtKB-UniRule"/>
</dbReference>
<dbReference type="GO" id="GO:0046983">
    <property type="term" value="F:protein dimerization activity"/>
    <property type="evidence" value="ECO:0007669"/>
    <property type="project" value="InterPro"/>
</dbReference>
<dbReference type="GO" id="GO:0006351">
    <property type="term" value="P:DNA-templated transcription"/>
    <property type="evidence" value="ECO:0007669"/>
    <property type="project" value="UniProtKB-UniRule"/>
</dbReference>
<dbReference type="CDD" id="cd06928">
    <property type="entry name" value="RNAP_alpha_NTD"/>
    <property type="match status" value="1"/>
</dbReference>
<dbReference type="FunFam" id="1.10.150.20:FF:000001">
    <property type="entry name" value="DNA-directed RNA polymerase subunit alpha"/>
    <property type="match status" value="1"/>
</dbReference>
<dbReference type="FunFam" id="2.170.120.12:FF:000001">
    <property type="entry name" value="DNA-directed RNA polymerase subunit alpha"/>
    <property type="match status" value="1"/>
</dbReference>
<dbReference type="Gene3D" id="1.10.150.20">
    <property type="entry name" value="5' to 3' exonuclease, C-terminal subdomain"/>
    <property type="match status" value="1"/>
</dbReference>
<dbReference type="Gene3D" id="2.170.120.12">
    <property type="entry name" value="DNA-directed RNA polymerase, insert domain"/>
    <property type="match status" value="1"/>
</dbReference>
<dbReference type="Gene3D" id="3.30.1360.10">
    <property type="entry name" value="RNA polymerase, RBP11-like subunit"/>
    <property type="match status" value="1"/>
</dbReference>
<dbReference type="HAMAP" id="MF_00059">
    <property type="entry name" value="RNApol_bact_RpoA"/>
    <property type="match status" value="1"/>
</dbReference>
<dbReference type="InterPro" id="IPR011262">
    <property type="entry name" value="DNA-dir_RNA_pol_insert"/>
</dbReference>
<dbReference type="InterPro" id="IPR011263">
    <property type="entry name" value="DNA-dir_RNA_pol_RpoA/D/Rpb3"/>
</dbReference>
<dbReference type="InterPro" id="IPR011773">
    <property type="entry name" value="DNA-dir_RpoA"/>
</dbReference>
<dbReference type="InterPro" id="IPR036603">
    <property type="entry name" value="RBP11-like"/>
</dbReference>
<dbReference type="InterPro" id="IPR011260">
    <property type="entry name" value="RNAP_asu_C"/>
</dbReference>
<dbReference type="InterPro" id="IPR036643">
    <property type="entry name" value="RNApol_insert_sf"/>
</dbReference>
<dbReference type="NCBIfam" id="NF003513">
    <property type="entry name" value="PRK05182.1-2"/>
    <property type="match status" value="1"/>
</dbReference>
<dbReference type="NCBIfam" id="NF003519">
    <property type="entry name" value="PRK05182.2-5"/>
    <property type="match status" value="1"/>
</dbReference>
<dbReference type="NCBIfam" id="TIGR02027">
    <property type="entry name" value="rpoA"/>
    <property type="match status" value="1"/>
</dbReference>
<dbReference type="Pfam" id="PF01000">
    <property type="entry name" value="RNA_pol_A_bac"/>
    <property type="match status" value="1"/>
</dbReference>
<dbReference type="Pfam" id="PF03118">
    <property type="entry name" value="RNA_pol_A_CTD"/>
    <property type="match status" value="1"/>
</dbReference>
<dbReference type="Pfam" id="PF01193">
    <property type="entry name" value="RNA_pol_L"/>
    <property type="match status" value="1"/>
</dbReference>
<dbReference type="SMART" id="SM00662">
    <property type="entry name" value="RPOLD"/>
    <property type="match status" value="1"/>
</dbReference>
<dbReference type="SUPFAM" id="SSF47789">
    <property type="entry name" value="C-terminal domain of RNA polymerase alpha subunit"/>
    <property type="match status" value="1"/>
</dbReference>
<dbReference type="SUPFAM" id="SSF56553">
    <property type="entry name" value="Insert subdomain of RNA polymerase alpha subunit"/>
    <property type="match status" value="1"/>
</dbReference>
<dbReference type="SUPFAM" id="SSF55257">
    <property type="entry name" value="RBP11-like subunits of RNA polymerase"/>
    <property type="match status" value="1"/>
</dbReference>
<reference key="1">
    <citation type="journal article" date="2006" name="J. Bacteriol.">
        <title>Complete genome sequence of Yersinia pestis strains Antiqua and Nepal516: evidence of gene reduction in an emerging pathogen.</title>
        <authorList>
            <person name="Chain P.S.G."/>
            <person name="Hu P."/>
            <person name="Malfatti S.A."/>
            <person name="Radnedge L."/>
            <person name="Larimer F."/>
            <person name="Vergez L.M."/>
            <person name="Worsham P."/>
            <person name="Chu M.C."/>
            <person name="Andersen G.L."/>
        </authorList>
    </citation>
    <scope>NUCLEOTIDE SEQUENCE [LARGE SCALE GENOMIC DNA]</scope>
    <source>
        <strain>Antiqua</strain>
    </source>
</reference>
<comment type="function">
    <text>DNA-dependent RNA polymerase catalyzes the transcription of DNA into RNA using the four ribonucleoside triphosphates as substrates.</text>
</comment>
<comment type="catalytic activity">
    <reaction evidence="1">
        <text>RNA(n) + a ribonucleoside 5'-triphosphate = RNA(n+1) + diphosphate</text>
        <dbReference type="Rhea" id="RHEA:21248"/>
        <dbReference type="Rhea" id="RHEA-COMP:14527"/>
        <dbReference type="Rhea" id="RHEA-COMP:17342"/>
        <dbReference type="ChEBI" id="CHEBI:33019"/>
        <dbReference type="ChEBI" id="CHEBI:61557"/>
        <dbReference type="ChEBI" id="CHEBI:140395"/>
        <dbReference type="EC" id="2.7.7.6"/>
    </reaction>
</comment>
<comment type="subunit">
    <text evidence="1">Homodimer. The RNAP catalytic core consists of 2 alpha, 1 beta, 1 beta' and 1 omega subunit. When a sigma factor is associated with the core the holoenzyme is formed, which can initiate transcription.</text>
</comment>
<comment type="domain">
    <text evidence="1">The N-terminal domain is essential for RNAP assembly and basal transcription, whereas the C-terminal domain is involved in interaction with transcriptional regulators and with upstream promoter elements.</text>
</comment>
<comment type="similarity">
    <text evidence="1">Belongs to the RNA polymerase alpha chain family.</text>
</comment>
<evidence type="ECO:0000255" key="1">
    <source>
        <dbReference type="HAMAP-Rule" id="MF_00059"/>
    </source>
</evidence>